<organism>
    <name type="scientific">Listeria welshimeri serovar 6b (strain ATCC 35897 / DSM 20650 / CCUG 15529 / CIP 8149 / NCTC 11857 / SLCC 5334 / V8)</name>
    <dbReference type="NCBI Taxonomy" id="386043"/>
    <lineage>
        <taxon>Bacteria</taxon>
        <taxon>Bacillati</taxon>
        <taxon>Bacillota</taxon>
        <taxon>Bacilli</taxon>
        <taxon>Bacillales</taxon>
        <taxon>Listeriaceae</taxon>
        <taxon>Listeria</taxon>
    </lineage>
</organism>
<sequence length="362" mass="39559">MTELLKTPIHPLYAKYGAKTIDFGGWDLPVQFAGIKAEHEAVRTDAGLFDVSHMGEILVKGPDSTSYLQYLLSNDIEKIKIGKAQYNIMCYENGGTVDDLVVYKKSETEYILVVNAANTEKDFEWMVQNVRGDVTVTNVSAEYGQLALQGPSAEKILSKLTDVDLSSISFFGFIEDVEVAGVKTIISRSGYTGEDGFEIYMASADAGKVFEAILAEGVAPIGLGARDTLRLEAVLALYGQELSKDITPLEAGLNFAVKLKKEADFIGKEALIKQKEAGLTRKLVGIELIERGIPRHDYPVFLNDKEVGIVTSGTQSPTFGTNIGLALIDTAYAELGQELEVGIRNKKVKAKIVQTPFYKRAK</sequence>
<feature type="chain" id="PRO_1000047678" description="Aminomethyltransferase">
    <location>
        <begin position="1"/>
        <end position="362"/>
    </location>
</feature>
<protein>
    <recommendedName>
        <fullName evidence="1">Aminomethyltransferase</fullName>
        <ecNumber evidence="1">2.1.2.10</ecNumber>
    </recommendedName>
    <alternativeName>
        <fullName evidence="1">Glycine cleavage system T protein</fullName>
    </alternativeName>
</protein>
<keyword id="KW-0032">Aminotransferase</keyword>
<keyword id="KW-0808">Transferase</keyword>
<dbReference type="EC" id="2.1.2.10" evidence="1"/>
<dbReference type="EMBL" id="AM263198">
    <property type="protein sequence ID" value="CAK20781.1"/>
    <property type="molecule type" value="Genomic_DNA"/>
</dbReference>
<dbReference type="RefSeq" id="WP_011702163.1">
    <property type="nucleotide sequence ID" value="NC_008555.1"/>
</dbReference>
<dbReference type="SMR" id="A0AIE9"/>
<dbReference type="STRING" id="386043.lwe1363"/>
<dbReference type="GeneID" id="61189239"/>
<dbReference type="KEGG" id="lwe:lwe1363"/>
<dbReference type="eggNOG" id="COG0404">
    <property type="taxonomic scope" value="Bacteria"/>
</dbReference>
<dbReference type="HOGENOM" id="CLU_007884_10_2_9"/>
<dbReference type="OrthoDB" id="9774591at2"/>
<dbReference type="Proteomes" id="UP000000779">
    <property type="component" value="Chromosome"/>
</dbReference>
<dbReference type="GO" id="GO:0005829">
    <property type="term" value="C:cytosol"/>
    <property type="evidence" value="ECO:0007669"/>
    <property type="project" value="TreeGrafter"/>
</dbReference>
<dbReference type="GO" id="GO:0005960">
    <property type="term" value="C:glycine cleavage complex"/>
    <property type="evidence" value="ECO:0007669"/>
    <property type="project" value="InterPro"/>
</dbReference>
<dbReference type="GO" id="GO:0004047">
    <property type="term" value="F:aminomethyltransferase activity"/>
    <property type="evidence" value="ECO:0007669"/>
    <property type="project" value="UniProtKB-UniRule"/>
</dbReference>
<dbReference type="GO" id="GO:0008483">
    <property type="term" value="F:transaminase activity"/>
    <property type="evidence" value="ECO:0007669"/>
    <property type="project" value="UniProtKB-KW"/>
</dbReference>
<dbReference type="GO" id="GO:0019464">
    <property type="term" value="P:glycine decarboxylation via glycine cleavage system"/>
    <property type="evidence" value="ECO:0007669"/>
    <property type="project" value="UniProtKB-UniRule"/>
</dbReference>
<dbReference type="FunFam" id="2.40.30.110:FF:000003">
    <property type="entry name" value="Aminomethyltransferase"/>
    <property type="match status" value="1"/>
</dbReference>
<dbReference type="FunFam" id="3.30.70.1400:FF:000001">
    <property type="entry name" value="Aminomethyltransferase"/>
    <property type="match status" value="1"/>
</dbReference>
<dbReference type="FunFam" id="4.10.1250.10:FF:000001">
    <property type="entry name" value="Aminomethyltransferase"/>
    <property type="match status" value="1"/>
</dbReference>
<dbReference type="Gene3D" id="2.40.30.110">
    <property type="entry name" value="Aminomethyltransferase beta-barrel domains"/>
    <property type="match status" value="1"/>
</dbReference>
<dbReference type="Gene3D" id="3.30.70.1400">
    <property type="entry name" value="Aminomethyltransferase beta-barrel domains"/>
    <property type="match status" value="1"/>
</dbReference>
<dbReference type="Gene3D" id="4.10.1250.10">
    <property type="entry name" value="Aminomethyltransferase fragment"/>
    <property type="match status" value="1"/>
</dbReference>
<dbReference type="Gene3D" id="3.30.1360.120">
    <property type="entry name" value="Probable tRNA modification gtpase trme, domain 1"/>
    <property type="match status" value="1"/>
</dbReference>
<dbReference type="HAMAP" id="MF_00259">
    <property type="entry name" value="GcvT"/>
    <property type="match status" value="1"/>
</dbReference>
<dbReference type="InterPro" id="IPR006223">
    <property type="entry name" value="GCS_T"/>
</dbReference>
<dbReference type="InterPro" id="IPR022903">
    <property type="entry name" value="GCS_T_bac"/>
</dbReference>
<dbReference type="InterPro" id="IPR013977">
    <property type="entry name" value="GCST_C"/>
</dbReference>
<dbReference type="InterPro" id="IPR006222">
    <property type="entry name" value="GCV_T_N"/>
</dbReference>
<dbReference type="InterPro" id="IPR028896">
    <property type="entry name" value="GcvT/YgfZ/DmdA"/>
</dbReference>
<dbReference type="InterPro" id="IPR029043">
    <property type="entry name" value="GcvT/YgfZ_C"/>
</dbReference>
<dbReference type="InterPro" id="IPR027266">
    <property type="entry name" value="TrmE/GcvT_dom1"/>
</dbReference>
<dbReference type="NCBIfam" id="TIGR00528">
    <property type="entry name" value="gcvT"/>
    <property type="match status" value="1"/>
</dbReference>
<dbReference type="NCBIfam" id="NF001567">
    <property type="entry name" value="PRK00389.1"/>
    <property type="match status" value="1"/>
</dbReference>
<dbReference type="PANTHER" id="PTHR43757">
    <property type="entry name" value="AMINOMETHYLTRANSFERASE"/>
    <property type="match status" value="1"/>
</dbReference>
<dbReference type="PANTHER" id="PTHR43757:SF2">
    <property type="entry name" value="AMINOMETHYLTRANSFERASE, MITOCHONDRIAL"/>
    <property type="match status" value="1"/>
</dbReference>
<dbReference type="Pfam" id="PF01571">
    <property type="entry name" value="GCV_T"/>
    <property type="match status" value="1"/>
</dbReference>
<dbReference type="Pfam" id="PF08669">
    <property type="entry name" value="GCV_T_C"/>
    <property type="match status" value="1"/>
</dbReference>
<dbReference type="PIRSF" id="PIRSF006487">
    <property type="entry name" value="GcvT"/>
    <property type="match status" value="1"/>
</dbReference>
<dbReference type="SUPFAM" id="SSF101790">
    <property type="entry name" value="Aminomethyltransferase beta-barrel domain"/>
    <property type="match status" value="1"/>
</dbReference>
<dbReference type="SUPFAM" id="SSF103025">
    <property type="entry name" value="Folate-binding domain"/>
    <property type="match status" value="1"/>
</dbReference>
<reference key="1">
    <citation type="journal article" date="2006" name="J. Bacteriol.">
        <title>Whole-genome sequence of Listeria welshimeri reveals common steps in genome reduction with Listeria innocua as compared to Listeria monocytogenes.</title>
        <authorList>
            <person name="Hain T."/>
            <person name="Steinweg C."/>
            <person name="Kuenne C.T."/>
            <person name="Billion A."/>
            <person name="Ghai R."/>
            <person name="Chatterjee S.S."/>
            <person name="Domann E."/>
            <person name="Kaerst U."/>
            <person name="Goesmann A."/>
            <person name="Bekel T."/>
            <person name="Bartels D."/>
            <person name="Kaiser O."/>
            <person name="Meyer F."/>
            <person name="Puehler A."/>
            <person name="Weisshaar B."/>
            <person name="Wehland J."/>
            <person name="Liang C."/>
            <person name="Dandekar T."/>
            <person name="Lampidis R."/>
            <person name="Kreft J."/>
            <person name="Goebel W."/>
            <person name="Chakraborty T."/>
        </authorList>
    </citation>
    <scope>NUCLEOTIDE SEQUENCE [LARGE SCALE GENOMIC DNA]</scope>
    <source>
        <strain>ATCC 35897 / DSM 20650 / CCUG 15529 / CIP 8149 / NCTC 11857 / SLCC 5334 / V8</strain>
    </source>
</reference>
<proteinExistence type="inferred from homology"/>
<gene>
    <name evidence="1" type="primary">gcvT</name>
    <name type="ordered locus">lwe1363</name>
</gene>
<evidence type="ECO:0000255" key="1">
    <source>
        <dbReference type="HAMAP-Rule" id="MF_00259"/>
    </source>
</evidence>
<comment type="function">
    <text evidence="1">The glycine cleavage system catalyzes the degradation of glycine.</text>
</comment>
<comment type="catalytic activity">
    <reaction evidence="1">
        <text>N(6)-[(R)-S(8)-aminomethyldihydrolipoyl]-L-lysyl-[protein] + (6S)-5,6,7,8-tetrahydrofolate = N(6)-[(R)-dihydrolipoyl]-L-lysyl-[protein] + (6R)-5,10-methylene-5,6,7,8-tetrahydrofolate + NH4(+)</text>
        <dbReference type="Rhea" id="RHEA:16945"/>
        <dbReference type="Rhea" id="RHEA-COMP:10475"/>
        <dbReference type="Rhea" id="RHEA-COMP:10492"/>
        <dbReference type="ChEBI" id="CHEBI:15636"/>
        <dbReference type="ChEBI" id="CHEBI:28938"/>
        <dbReference type="ChEBI" id="CHEBI:57453"/>
        <dbReference type="ChEBI" id="CHEBI:83100"/>
        <dbReference type="ChEBI" id="CHEBI:83143"/>
        <dbReference type="EC" id="2.1.2.10"/>
    </reaction>
</comment>
<comment type="subunit">
    <text evidence="1">The glycine cleavage system is composed of four proteins: P, T, L and H.</text>
</comment>
<comment type="similarity">
    <text evidence="1">Belongs to the GcvT family.</text>
</comment>
<accession>A0AIE9</accession>
<name>GCST_LISW6</name>